<feature type="chain" id="PRO_1000098664" description="tRNA dimethylallyltransferase">
    <location>
        <begin position="1"/>
        <end position="316"/>
    </location>
</feature>
<feature type="region of interest" description="Interaction with substrate tRNA" evidence="1">
    <location>
        <begin position="42"/>
        <end position="45"/>
    </location>
</feature>
<feature type="region of interest" description="Interaction with substrate tRNA" evidence="1">
    <location>
        <begin position="166"/>
        <end position="170"/>
    </location>
</feature>
<feature type="region of interest" description="Interaction with substrate tRNA" evidence="1">
    <location>
        <begin position="247"/>
        <end position="252"/>
    </location>
</feature>
<feature type="binding site" evidence="1">
    <location>
        <begin position="17"/>
        <end position="24"/>
    </location>
    <ligand>
        <name>ATP</name>
        <dbReference type="ChEBI" id="CHEBI:30616"/>
    </ligand>
</feature>
<feature type="binding site" evidence="1">
    <location>
        <begin position="19"/>
        <end position="24"/>
    </location>
    <ligand>
        <name>substrate</name>
    </ligand>
</feature>
<feature type="site" description="Interaction with substrate tRNA" evidence="1">
    <location>
        <position position="108"/>
    </location>
</feature>
<feature type="site" description="Interaction with substrate tRNA" evidence="1">
    <location>
        <position position="130"/>
    </location>
</feature>
<sequence length="316" mass="35206">MSEQTTAGLPKAIFLMGPTASGKTALAIALRQALPVELISVDSALIYRGMDIGTAKPSAEELALAPHRLLDIRDPSEAYSAAEFRRDALVEMAEITRRGNIPLLVGGTMLYYKALLEGLSPLPSADPEVRQRIEQMAGEAGWEALHRQLCDIDPVAANRIHPNDPQRLSRALEVFFISGKTLTELTKISGEILPYDVSQFAIAPASRELIHQRIEQRFHQMLASGFEAEARALFARGDLHTEMPSIRCVGYRQMWSYLAGETDYDDMVYRGICATRQLAKRQMTWLRGWKDVHWLDSEQPDAAYSRVLQVLSAKPG</sequence>
<accession>B2VCX4</accession>
<proteinExistence type="inferred from homology"/>
<gene>
    <name evidence="1" type="primary">miaA</name>
    <name type="ordered locus">ETA_29680</name>
</gene>
<evidence type="ECO:0000255" key="1">
    <source>
        <dbReference type="HAMAP-Rule" id="MF_00185"/>
    </source>
</evidence>
<protein>
    <recommendedName>
        <fullName evidence="1">tRNA dimethylallyltransferase</fullName>
        <ecNumber evidence="1">2.5.1.75</ecNumber>
    </recommendedName>
    <alternativeName>
        <fullName evidence="1">Dimethylallyl diphosphate:tRNA dimethylallyltransferase</fullName>
        <shortName evidence="1">DMAPP:tRNA dimethylallyltransferase</shortName>
        <shortName evidence="1">DMATase</shortName>
    </alternativeName>
    <alternativeName>
        <fullName evidence="1">Isopentenyl-diphosphate:tRNA isopentenyltransferase</fullName>
        <shortName evidence="1">IPP transferase</shortName>
        <shortName evidence="1">IPPT</shortName>
        <shortName evidence="1">IPTase</shortName>
    </alternativeName>
</protein>
<reference key="1">
    <citation type="journal article" date="2008" name="Environ. Microbiol.">
        <title>The genome of Erwinia tasmaniensis strain Et1/99, a non-pathogenic bacterium in the genus Erwinia.</title>
        <authorList>
            <person name="Kube M."/>
            <person name="Migdoll A.M."/>
            <person name="Mueller I."/>
            <person name="Kuhl H."/>
            <person name="Beck A."/>
            <person name="Reinhardt R."/>
            <person name="Geider K."/>
        </authorList>
    </citation>
    <scope>NUCLEOTIDE SEQUENCE [LARGE SCALE GENOMIC DNA]</scope>
    <source>
        <strain>DSM 17950 / CFBP 7177 / CIP 109463 / NCPPB 4357 / Et1/99</strain>
    </source>
</reference>
<keyword id="KW-0067">ATP-binding</keyword>
<keyword id="KW-0460">Magnesium</keyword>
<keyword id="KW-0547">Nucleotide-binding</keyword>
<keyword id="KW-1185">Reference proteome</keyword>
<keyword id="KW-0808">Transferase</keyword>
<keyword id="KW-0819">tRNA processing</keyword>
<organism>
    <name type="scientific">Erwinia tasmaniensis (strain DSM 17950 / CFBP 7177 / CIP 109463 / NCPPB 4357 / Et1/99)</name>
    <dbReference type="NCBI Taxonomy" id="465817"/>
    <lineage>
        <taxon>Bacteria</taxon>
        <taxon>Pseudomonadati</taxon>
        <taxon>Pseudomonadota</taxon>
        <taxon>Gammaproteobacteria</taxon>
        <taxon>Enterobacterales</taxon>
        <taxon>Erwiniaceae</taxon>
        <taxon>Erwinia</taxon>
    </lineage>
</organism>
<dbReference type="EC" id="2.5.1.75" evidence="1"/>
<dbReference type="EMBL" id="CU468135">
    <property type="protein sequence ID" value="CAO98014.1"/>
    <property type="molecule type" value="Genomic_DNA"/>
</dbReference>
<dbReference type="RefSeq" id="WP_012442666.1">
    <property type="nucleotide sequence ID" value="NC_010694.1"/>
</dbReference>
<dbReference type="SMR" id="B2VCX4"/>
<dbReference type="STRING" id="465817.ETA_29680"/>
<dbReference type="KEGG" id="eta:ETA_29680"/>
<dbReference type="eggNOG" id="COG0324">
    <property type="taxonomic scope" value="Bacteria"/>
</dbReference>
<dbReference type="HOGENOM" id="CLU_032616_0_0_6"/>
<dbReference type="OrthoDB" id="9776390at2"/>
<dbReference type="Proteomes" id="UP000001726">
    <property type="component" value="Chromosome"/>
</dbReference>
<dbReference type="GO" id="GO:0005524">
    <property type="term" value="F:ATP binding"/>
    <property type="evidence" value="ECO:0007669"/>
    <property type="project" value="UniProtKB-UniRule"/>
</dbReference>
<dbReference type="GO" id="GO:0052381">
    <property type="term" value="F:tRNA dimethylallyltransferase activity"/>
    <property type="evidence" value="ECO:0007669"/>
    <property type="project" value="UniProtKB-UniRule"/>
</dbReference>
<dbReference type="GO" id="GO:0006400">
    <property type="term" value="P:tRNA modification"/>
    <property type="evidence" value="ECO:0007669"/>
    <property type="project" value="TreeGrafter"/>
</dbReference>
<dbReference type="FunFam" id="1.10.20.140:FF:000001">
    <property type="entry name" value="tRNA dimethylallyltransferase"/>
    <property type="match status" value="1"/>
</dbReference>
<dbReference type="Gene3D" id="1.10.20.140">
    <property type="match status" value="1"/>
</dbReference>
<dbReference type="Gene3D" id="3.40.50.300">
    <property type="entry name" value="P-loop containing nucleotide triphosphate hydrolases"/>
    <property type="match status" value="1"/>
</dbReference>
<dbReference type="HAMAP" id="MF_00185">
    <property type="entry name" value="IPP_trans"/>
    <property type="match status" value="1"/>
</dbReference>
<dbReference type="InterPro" id="IPR039657">
    <property type="entry name" value="Dimethylallyltransferase"/>
</dbReference>
<dbReference type="InterPro" id="IPR018022">
    <property type="entry name" value="IPT"/>
</dbReference>
<dbReference type="InterPro" id="IPR027417">
    <property type="entry name" value="P-loop_NTPase"/>
</dbReference>
<dbReference type="NCBIfam" id="TIGR00174">
    <property type="entry name" value="miaA"/>
    <property type="match status" value="1"/>
</dbReference>
<dbReference type="PANTHER" id="PTHR11088">
    <property type="entry name" value="TRNA DIMETHYLALLYLTRANSFERASE"/>
    <property type="match status" value="1"/>
</dbReference>
<dbReference type="PANTHER" id="PTHR11088:SF60">
    <property type="entry name" value="TRNA DIMETHYLALLYLTRANSFERASE"/>
    <property type="match status" value="1"/>
</dbReference>
<dbReference type="Pfam" id="PF01715">
    <property type="entry name" value="IPPT"/>
    <property type="match status" value="1"/>
</dbReference>
<dbReference type="SUPFAM" id="SSF52540">
    <property type="entry name" value="P-loop containing nucleoside triphosphate hydrolases"/>
    <property type="match status" value="1"/>
</dbReference>
<name>MIAA_ERWT9</name>
<comment type="function">
    <text evidence="1">Catalyzes the transfer of a dimethylallyl group onto the adenine at position 37 in tRNAs that read codons beginning with uridine, leading to the formation of N6-(dimethylallyl)adenosine (i(6)A).</text>
</comment>
<comment type="catalytic activity">
    <reaction evidence="1">
        <text>adenosine(37) in tRNA + dimethylallyl diphosphate = N(6)-dimethylallyladenosine(37) in tRNA + diphosphate</text>
        <dbReference type="Rhea" id="RHEA:26482"/>
        <dbReference type="Rhea" id="RHEA-COMP:10162"/>
        <dbReference type="Rhea" id="RHEA-COMP:10375"/>
        <dbReference type="ChEBI" id="CHEBI:33019"/>
        <dbReference type="ChEBI" id="CHEBI:57623"/>
        <dbReference type="ChEBI" id="CHEBI:74411"/>
        <dbReference type="ChEBI" id="CHEBI:74415"/>
        <dbReference type="EC" id="2.5.1.75"/>
    </reaction>
</comment>
<comment type="cofactor">
    <cofactor evidence="1">
        <name>Mg(2+)</name>
        <dbReference type="ChEBI" id="CHEBI:18420"/>
    </cofactor>
</comment>
<comment type="subunit">
    <text evidence="1">Monomer.</text>
</comment>
<comment type="similarity">
    <text evidence="1">Belongs to the IPP transferase family.</text>
</comment>